<comment type="function">
    <text evidence="1">Peptide chain release factor 2 directs the termination of translation in response to the peptide chain termination codons UGA and UAA.</text>
</comment>
<comment type="subcellular location">
    <subcellularLocation>
        <location evidence="1">Cytoplasm</location>
    </subcellularLocation>
</comment>
<comment type="PTM">
    <text evidence="1">Methylated by PrmC. Methylation increases the termination efficiency of RF2.</text>
</comment>
<comment type="similarity">
    <text evidence="1">Belongs to the prokaryotic/mitochondrial release factor family.</text>
</comment>
<sequence length="363" mass="41326">MDNYTYSELLKSLQNKCDNIALIIKPEKIKQELERIEKEQEDPNFWQDVLKARDTNKEKVRLNRLLETYQKTKNSLDESVELFELAQNDNDETTLSLLYEEAPTLEHSVQKVEIEIMLSGENDASNAIITIQPGAGGTESQDWASILYRMYLRWAERRGFKSEILDYQDGEEAGIKGVAFIIKGENAYGYLKNENGVHRLVRISPFDANAKRHTSFASVQISPELDDDIDIEIDEKDVRYDYYRASGAGGQHVNKTESAVRITHFPTGIVVQCQNDRSQHKNKASALKMLKSKLYELELEKQQSSAKNEEKSEIGWGHQIRSYVLAPYQQVKDARSNIAYSNVEAILDGDIDAILEGVLIAKA</sequence>
<accession>B5Z9U4</accession>
<protein>
    <recommendedName>
        <fullName evidence="1">Peptide chain release factor 2</fullName>
        <shortName evidence="1">RF-2</shortName>
    </recommendedName>
</protein>
<feature type="chain" id="PRO_1000093541" description="Peptide chain release factor 2">
    <location>
        <begin position="1"/>
        <end position="363"/>
    </location>
</feature>
<feature type="modified residue" description="N5-methylglutamine" evidence="1">
    <location>
        <position position="251"/>
    </location>
</feature>
<evidence type="ECO:0000255" key="1">
    <source>
        <dbReference type="HAMAP-Rule" id="MF_00094"/>
    </source>
</evidence>
<proteinExistence type="inferred from homology"/>
<reference key="1">
    <citation type="journal article" date="2009" name="J. Bacteriol.">
        <title>The complete genome sequence of Helicobacter pylori strain G27.</title>
        <authorList>
            <person name="Baltrus D.A."/>
            <person name="Amieva M.R."/>
            <person name="Covacci A."/>
            <person name="Lowe T.M."/>
            <person name="Merrell D.S."/>
            <person name="Ottemann K.M."/>
            <person name="Stein M."/>
            <person name="Salama N.R."/>
            <person name="Guillemin K."/>
        </authorList>
    </citation>
    <scope>NUCLEOTIDE SEQUENCE [LARGE SCALE GENOMIC DNA]</scope>
    <source>
        <strain>G27</strain>
    </source>
</reference>
<dbReference type="EMBL" id="CP001173">
    <property type="protein sequence ID" value="ACI26924.1"/>
    <property type="molecule type" value="Genomic_DNA"/>
</dbReference>
<dbReference type="RefSeq" id="WP_000371108.1">
    <property type="nucleotide sequence ID" value="NC_011333.1"/>
</dbReference>
<dbReference type="SMR" id="B5Z9U4"/>
<dbReference type="KEGG" id="hpg:HPG27_156"/>
<dbReference type="HOGENOM" id="CLU_036856_6_0_7"/>
<dbReference type="Proteomes" id="UP000001735">
    <property type="component" value="Chromosome"/>
</dbReference>
<dbReference type="GO" id="GO:0005737">
    <property type="term" value="C:cytoplasm"/>
    <property type="evidence" value="ECO:0007669"/>
    <property type="project" value="UniProtKB-SubCell"/>
</dbReference>
<dbReference type="GO" id="GO:0016149">
    <property type="term" value="F:translation release factor activity, codon specific"/>
    <property type="evidence" value="ECO:0007669"/>
    <property type="project" value="UniProtKB-UniRule"/>
</dbReference>
<dbReference type="FunFam" id="3.30.160.20:FF:000010">
    <property type="entry name" value="Peptide chain release factor 2"/>
    <property type="match status" value="1"/>
</dbReference>
<dbReference type="Gene3D" id="3.30.160.20">
    <property type="match status" value="1"/>
</dbReference>
<dbReference type="Gene3D" id="3.30.70.1660">
    <property type="match status" value="1"/>
</dbReference>
<dbReference type="Gene3D" id="1.20.58.410">
    <property type="entry name" value="Release factor"/>
    <property type="match status" value="1"/>
</dbReference>
<dbReference type="HAMAP" id="MF_00094">
    <property type="entry name" value="Rel_fac_2"/>
    <property type="match status" value="1"/>
</dbReference>
<dbReference type="InterPro" id="IPR005139">
    <property type="entry name" value="PCRF"/>
</dbReference>
<dbReference type="InterPro" id="IPR000352">
    <property type="entry name" value="Pep_chain_release_fac_I"/>
</dbReference>
<dbReference type="InterPro" id="IPR045853">
    <property type="entry name" value="Pep_chain_release_fac_I_sf"/>
</dbReference>
<dbReference type="InterPro" id="IPR004374">
    <property type="entry name" value="PrfB"/>
</dbReference>
<dbReference type="NCBIfam" id="TIGR00020">
    <property type="entry name" value="prfB"/>
    <property type="match status" value="1"/>
</dbReference>
<dbReference type="PANTHER" id="PTHR43116:SF3">
    <property type="entry name" value="CLASS I PEPTIDE CHAIN RELEASE FACTOR"/>
    <property type="match status" value="1"/>
</dbReference>
<dbReference type="PANTHER" id="PTHR43116">
    <property type="entry name" value="PEPTIDE CHAIN RELEASE FACTOR 2"/>
    <property type="match status" value="1"/>
</dbReference>
<dbReference type="Pfam" id="PF03462">
    <property type="entry name" value="PCRF"/>
    <property type="match status" value="1"/>
</dbReference>
<dbReference type="Pfam" id="PF00472">
    <property type="entry name" value="RF-1"/>
    <property type="match status" value="1"/>
</dbReference>
<dbReference type="SMART" id="SM00937">
    <property type="entry name" value="PCRF"/>
    <property type="match status" value="1"/>
</dbReference>
<dbReference type="SUPFAM" id="SSF75620">
    <property type="entry name" value="Release factor"/>
    <property type="match status" value="1"/>
</dbReference>
<dbReference type="PROSITE" id="PS00745">
    <property type="entry name" value="RF_PROK_I"/>
    <property type="match status" value="1"/>
</dbReference>
<organism>
    <name type="scientific">Helicobacter pylori (strain G27)</name>
    <dbReference type="NCBI Taxonomy" id="563041"/>
    <lineage>
        <taxon>Bacteria</taxon>
        <taxon>Pseudomonadati</taxon>
        <taxon>Campylobacterota</taxon>
        <taxon>Epsilonproteobacteria</taxon>
        <taxon>Campylobacterales</taxon>
        <taxon>Helicobacteraceae</taxon>
        <taxon>Helicobacter</taxon>
    </lineage>
</organism>
<keyword id="KW-0963">Cytoplasm</keyword>
<keyword id="KW-0488">Methylation</keyword>
<keyword id="KW-0648">Protein biosynthesis</keyword>
<keyword id="KW-1185">Reference proteome</keyword>
<gene>
    <name evidence="1" type="primary">prfB</name>
    <name type="ordered locus">HPG27_156</name>
</gene>
<name>RF2_HELPG</name>